<protein>
    <recommendedName>
        <fullName evidence="1">Large ribosomal subunit protein bL20</fullName>
    </recommendedName>
    <alternativeName>
        <fullName evidence="2">50S ribosomal protein L20</fullName>
    </alternativeName>
</protein>
<organism>
    <name type="scientific">Mycoplasmopsis synoviae (strain 53)</name>
    <name type="common">Mycoplasma synoviae</name>
    <dbReference type="NCBI Taxonomy" id="262723"/>
    <lineage>
        <taxon>Bacteria</taxon>
        <taxon>Bacillati</taxon>
        <taxon>Mycoplasmatota</taxon>
        <taxon>Mycoplasmoidales</taxon>
        <taxon>Metamycoplasmataceae</taxon>
        <taxon>Mycoplasmopsis</taxon>
    </lineage>
</organism>
<dbReference type="EMBL" id="AE017245">
    <property type="protein sequence ID" value="AAZ44015.1"/>
    <property type="molecule type" value="Genomic_DNA"/>
</dbReference>
<dbReference type="RefSeq" id="WP_011283744.1">
    <property type="nucleotide sequence ID" value="NC_007294.1"/>
</dbReference>
<dbReference type="SMR" id="Q4A5F6"/>
<dbReference type="STRING" id="262723.MS53_0608"/>
<dbReference type="GeneID" id="93530399"/>
<dbReference type="KEGG" id="msy:MS53_0608"/>
<dbReference type="eggNOG" id="COG0292">
    <property type="taxonomic scope" value="Bacteria"/>
</dbReference>
<dbReference type="HOGENOM" id="CLU_123265_0_1_14"/>
<dbReference type="OrthoDB" id="9808966at2"/>
<dbReference type="Proteomes" id="UP000000549">
    <property type="component" value="Chromosome"/>
</dbReference>
<dbReference type="GO" id="GO:1990904">
    <property type="term" value="C:ribonucleoprotein complex"/>
    <property type="evidence" value="ECO:0007669"/>
    <property type="project" value="UniProtKB-KW"/>
</dbReference>
<dbReference type="GO" id="GO:0005840">
    <property type="term" value="C:ribosome"/>
    <property type="evidence" value="ECO:0007669"/>
    <property type="project" value="UniProtKB-KW"/>
</dbReference>
<dbReference type="GO" id="GO:0019843">
    <property type="term" value="F:rRNA binding"/>
    <property type="evidence" value="ECO:0007669"/>
    <property type="project" value="UniProtKB-UniRule"/>
</dbReference>
<dbReference type="GO" id="GO:0003735">
    <property type="term" value="F:structural constituent of ribosome"/>
    <property type="evidence" value="ECO:0007669"/>
    <property type="project" value="InterPro"/>
</dbReference>
<dbReference type="GO" id="GO:0000027">
    <property type="term" value="P:ribosomal large subunit assembly"/>
    <property type="evidence" value="ECO:0007669"/>
    <property type="project" value="UniProtKB-UniRule"/>
</dbReference>
<dbReference type="GO" id="GO:0006412">
    <property type="term" value="P:translation"/>
    <property type="evidence" value="ECO:0007669"/>
    <property type="project" value="InterPro"/>
</dbReference>
<dbReference type="CDD" id="cd07026">
    <property type="entry name" value="Ribosomal_L20"/>
    <property type="match status" value="1"/>
</dbReference>
<dbReference type="FunFam" id="1.10.1900.20:FF:000001">
    <property type="entry name" value="50S ribosomal protein L20"/>
    <property type="match status" value="1"/>
</dbReference>
<dbReference type="Gene3D" id="6.10.160.10">
    <property type="match status" value="1"/>
</dbReference>
<dbReference type="Gene3D" id="1.10.1900.20">
    <property type="entry name" value="Ribosomal protein L20"/>
    <property type="match status" value="1"/>
</dbReference>
<dbReference type="HAMAP" id="MF_00382">
    <property type="entry name" value="Ribosomal_bL20"/>
    <property type="match status" value="1"/>
</dbReference>
<dbReference type="InterPro" id="IPR005813">
    <property type="entry name" value="Ribosomal_bL20"/>
</dbReference>
<dbReference type="InterPro" id="IPR049946">
    <property type="entry name" value="RIBOSOMAL_L20_CS"/>
</dbReference>
<dbReference type="InterPro" id="IPR035566">
    <property type="entry name" value="Ribosomal_protein_bL20_C"/>
</dbReference>
<dbReference type="NCBIfam" id="TIGR01032">
    <property type="entry name" value="rplT_bact"/>
    <property type="match status" value="1"/>
</dbReference>
<dbReference type="PANTHER" id="PTHR10986">
    <property type="entry name" value="39S RIBOSOMAL PROTEIN L20"/>
    <property type="match status" value="1"/>
</dbReference>
<dbReference type="Pfam" id="PF00453">
    <property type="entry name" value="Ribosomal_L20"/>
    <property type="match status" value="1"/>
</dbReference>
<dbReference type="PRINTS" id="PR00062">
    <property type="entry name" value="RIBOSOMALL20"/>
</dbReference>
<dbReference type="SUPFAM" id="SSF74731">
    <property type="entry name" value="Ribosomal protein L20"/>
    <property type="match status" value="1"/>
</dbReference>
<dbReference type="PROSITE" id="PS00937">
    <property type="entry name" value="RIBOSOMAL_L20"/>
    <property type="match status" value="1"/>
</dbReference>
<accession>Q4A5F6</accession>
<comment type="function">
    <text evidence="1">Binds directly to 23S ribosomal RNA and is necessary for the in vitro assembly process of the 50S ribosomal subunit. It is not involved in the protein synthesizing functions of that subunit.</text>
</comment>
<comment type="similarity">
    <text evidence="1">Belongs to the bacterial ribosomal protein bL20 family.</text>
</comment>
<reference key="1">
    <citation type="journal article" date="2005" name="J. Bacteriol.">
        <title>Swine and poultry pathogens: the complete genome sequences of two strains of Mycoplasma hyopneumoniae and a strain of Mycoplasma synoviae.</title>
        <authorList>
            <person name="Vasconcelos A.T.R."/>
            <person name="Ferreira H.B."/>
            <person name="Bizarro C.V."/>
            <person name="Bonatto S.L."/>
            <person name="Carvalho M.O."/>
            <person name="Pinto P.M."/>
            <person name="Almeida D.F."/>
            <person name="Almeida L.G.P."/>
            <person name="Almeida R."/>
            <person name="Alves-Junior L."/>
            <person name="Assuncao E.N."/>
            <person name="Azevedo V.A.C."/>
            <person name="Bogo M.R."/>
            <person name="Brigido M.M."/>
            <person name="Brocchi M."/>
            <person name="Burity H.A."/>
            <person name="Camargo A.A."/>
            <person name="Camargo S.S."/>
            <person name="Carepo M.S."/>
            <person name="Carraro D.M."/>
            <person name="de Mattos Cascardo J.C."/>
            <person name="Castro L.A."/>
            <person name="Cavalcanti G."/>
            <person name="Chemale G."/>
            <person name="Collevatti R.G."/>
            <person name="Cunha C.W."/>
            <person name="Dallagiovanna B."/>
            <person name="Dambros B.P."/>
            <person name="Dellagostin O.A."/>
            <person name="Falcao C."/>
            <person name="Fantinatti-Garboggini F."/>
            <person name="Felipe M.S.S."/>
            <person name="Fiorentin L."/>
            <person name="Franco G.R."/>
            <person name="Freitas N.S.A."/>
            <person name="Frias D."/>
            <person name="Grangeiro T.B."/>
            <person name="Grisard E.C."/>
            <person name="Guimaraes C.T."/>
            <person name="Hungria M."/>
            <person name="Jardim S.N."/>
            <person name="Krieger M.A."/>
            <person name="Laurino J.P."/>
            <person name="Lima L.F.A."/>
            <person name="Lopes M.I."/>
            <person name="Loreto E.L.S."/>
            <person name="Madeira H.M.F."/>
            <person name="Manfio G.P."/>
            <person name="Maranhao A.Q."/>
            <person name="Martinkovics C.T."/>
            <person name="Medeiros S.R.B."/>
            <person name="Moreira M.A.M."/>
            <person name="Neiva M."/>
            <person name="Ramalho-Neto C.E."/>
            <person name="Nicolas M.F."/>
            <person name="Oliveira S.C."/>
            <person name="Paixao R.F.C."/>
            <person name="Pedrosa F.O."/>
            <person name="Pena S.D.J."/>
            <person name="Pereira M."/>
            <person name="Pereira-Ferrari L."/>
            <person name="Piffer I."/>
            <person name="Pinto L.S."/>
            <person name="Potrich D.P."/>
            <person name="Salim A.C.M."/>
            <person name="Santos F.R."/>
            <person name="Schmitt R."/>
            <person name="Schneider M.P.C."/>
            <person name="Schrank A."/>
            <person name="Schrank I.S."/>
            <person name="Schuck A.F."/>
            <person name="Seuanez H.N."/>
            <person name="Silva D.W."/>
            <person name="Silva R."/>
            <person name="Silva S.C."/>
            <person name="Soares C.M.A."/>
            <person name="Souza K.R.L."/>
            <person name="Souza R.C."/>
            <person name="Staats C.C."/>
            <person name="Steffens M.B.R."/>
            <person name="Teixeira S.M.R."/>
            <person name="Urmenyi T.P."/>
            <person name="Vainstein M.H."/>
            <person name="Zuccherato L.W."/>
            <person name="Simpson A.J.G."/>
            <person name="Zaha A."/>
        </authorList>
    </citation>
    <scope>NUCLEOTIDE SEQUENCE [LARGE SCALE GENOMIC DNA]</scope>
    <source>
        <strain>53</strain>
    </source>
</reference>
<gene>
    <name evidence="1" type="primary">rplT</name>
    <name type="ordered locus">MS53_0608</name>
</gene>
<proteinExistence type="inferred from homology"/>
<evidence type="ECO:0000255" key="1">
    <source>
        <dbReference type="HAMAP-Rule" id="MF_00382"/>
    </source>
</evidence>
<evidence type="ECO:0000305" key="2"/>
<name>RL20_MYCS5</name>
<keyword id="KW-1185">Reference proteome</keyword>
<keyword id="KW-0687">Ribonucleoprotein</keyword>
<keyword id="KW-0689">Ribosomal protein</keyword>
<keyword id="KW-0694">RNA-binding</keyword>
<keyword id="KW-0699">rRNA-binding</keyword>
<sequence length="116" mass="13429">MARVKGGTVTRARRKKWIKLAKGYFGHKSVGYKVAKQAVVKSWTYAFRDRKQVKRNFRKLWIARINAAVRPHGLSYSQFINGLKKAEVLINRKMLSELAINQPQTFEKLVKLVQGK</sequence>
<feature type="chain" id="PRO_0000243703" description="Large ribosomal subunit protein bL20">
    <location>
        <begin position="1"/>
        <end position="116"/>
    </location>
</feature>